<accession>O94715</accession>
<proteinExistence type="inferred from homology"/>
<protein>
    <recommendedName>
        <fullName evidence="3">Small ribosomal subunit protein uS19A</fullName>
    </recommendedName>
    <alternativeName>
        <fullName>40S ribosomal protein S15-A</fullName>
    </alternativeName>
</protein>
<sequence length="153" mass="17519">MAEEHDEAVRVAELRKKRSFRTFAYRGVELEQLLDLSAEQLVDLFHARARRRMLRGLGPNASRFIRKLRKAKTEAPLNEKPATVKTHLRNMIILPEMVGSVVGIYNGKLFNQVEIRPEMIGHYLGEFSITYKPTKHGRPGIGATHSSRFIPLK</sequence>
<gene>
    <name type="primary">rps1501</name>
    <name type="synonym">rps15a</name>
    <name type="ORF">SPCC1393.03</name>
</gene>
<evidence type="ECO:0000250" key="1">
    <source>
        <dbReference type="UniProtKB" id="Q01855"/>
    </source>
</evidence>
<evidence type="ECO:0000269" key="2">
    <source>
    </source>
</evidence>
<evidence type="ECO:0000305" key="3"/>
<name>RS15A_SCHPO</name>
<dbReference type="EMBL" id="CU329672">
    <property type="protein sequence ID" value="CAB38159.1"/>
    <property type="molecule type" value="Genomic_DNA"/>
</dbReference>
<dbReference type="PIR" id="T40951">
    <property type="entry name" value="T40951"/>
</dbReference>
<dbReference type="RefSeq" id="NP_587961.1">
    <property type="nucleotide sequence ID" value="NM_001022952.2"/>
</dbReference>
<dbReference type="SMR" id="O94715"/>
<dbReference type="BioGRID" id="275470">
    <property type="interactions" value="6"/>
</dbReference>
<dbReference type="FunCoup" id="O94715">
    <property type="interactions" value="412"/>
</dbReference>
<dbReference type="STRING" id="284812.O94715"/>
<dbReference type="iPTMnet" id="O94715"/>
<dbReference type="PaxDb" id="4896-SPCC1393.03.1"/>
<dbReference type="EnsemblFungi" id="SPCC1393.03.1">
    <property type="protein sequence ID" value="SPCC1393.03.1:pep"/>
    <property type="gene ID" value="SPCC1393.03"/>
</dbReference>
<dbReference type="GeneID" id="2538892"/>
<dbReference type="KEGG" id="spo:2538892"/>
<dbReference type="PomBase" id="SPCC1393.03">
    <property type="gene designation" value="rps1501"/>
</dbReference>
<dbReference type="VEuPathDB" id="FungiDB:SPCC1393.03"/>
<dbReference type="eggNOG" id="KOG0898">
    <property type="taxonomic scope" value="Eukaryota"/>
</dbReference>
<dbReference type="HOGENOM" id="CLU_097347_1_0_1"/>
<dbReference type="InParanoid" id="O94715"/>
<dbReference type="OMA" id="CNIISHI"/>
<dbReference type="PhylomeDB" id="O94715"/>
<dbReference type="Reactome" id="R-SPO-156827">
    <property type="pathway name" value="L13a-mediated translational silencing of Ceruloplasmin expression"/>
</dbReference>
<dbReference type="Reactome" id="R-SPO-1799339">
    <property type="pathway name" value="SRP-dependent cotranslational protein targeting to membrane"/>
</dbReference>
<dbReference type="Reactome" id="R-SPO-72649">
    <property type="pathway name" value="Translation initiation complex formation"/>
</dbReference>
<dbReference type="Reactome" id="R-SPO-72689">
    <property type="pathway name" value="Formation of a pool of free 40S subunits"/>
</dbReference>
<dbReference type="Reactome" id="R-SPO-72695">
    <property type="pathway name" value="Formation of the ternary complex, and subsequently, the 43S complex"/>
</dbReference>
<dbReference type="Reactome" id="R-SPO-72702">
    <property type="pathway name" value="Ribosomal scanning and start codon recognition"/>
</dbReference>
<dbReference type="Reactome" id="R-SPO-72706">
    <property type="pathway name" value="GTP hydrolysis and joining of the 60S ribosomal subunit"/>
</dbReference>
<dbReference type="Reactome" id="R-SPO-975956">
    <property type="pathway name" value="Nonsense Mediated Decay (NMD) independent of the Exon Junction Complex (EJC)"/>
</dbReference>
<dbReference type="Reactome" id="R-SPO-975957">
    <property type="pathway name" value="Nonsense Mediated Decay (NMD) enhanced by the Exon Junction Complex (EJC)"/>
</dbReference>
<dbReference type="PRO" id="PR:O94715"/>
<dbReference type="Proteomes" id="UP000002485">
    <property type="component" value="Chromosome III"/>
</dbReference>
<dbReference type="GO" id="GO:0022627">
    <property type="term" value="C:cytosolic small ribosomal subunit"/>
    <property type="evidence" value="ECO:0000318"/>
    <property type="project" value="GO_Central"/>
</dbReference>
<dbReference type="GO" id="GO:0005730">
    <property type="term" value="C:nucleolus"/>
    <property type="evidence" value="ECO:0007005"/>
    <property type="project" value="PomBase"/>
</dbReference>
<dbReference type="GO" id="GO:0005634">
    <property type="term" value="C:nucleus"/>
    <property type="evidence" value="ECO:0007005"/>
    <property type="project" value="PomBase"/>
</dbReference>
<dbReference type="GO" id="GO:0003723">
    <property type="term" value="F:RNA binding"/>
    <property type="evidence" value="ECO:0007669"/>
    <property type="project" value="InterPro"/>
</dbReference>
<dbReference type="GO" id="GO:0003735">
    <property type="term" value="F:structural constituent of ribosome"/>
    <property type="evidence" value="ECO:0000318"/>
    <property type="project" value="GO_Central"/>
</dbReference>
<dbReference type="GO" id="GO:0002181">
    <property type="term" value="P:cytoplasmic translation"/>
    <property type="evidence" value="ECO:0000266"/>
    <property type="project" value="PomBase"/>
</dbReference>
<dbReference type="GO" id="GO:0000028">
    <property type="term" value="P:ribosomal small subunit assembly"/>
    <property type="evidence" value="ECO:0000318"/>
    <property type="project" value="GO_Central"/>
</dbReference>
<dbReference type="FunFam" id="3.30.860.10:FF:000002">
    <property type="entry name" value="40S ribosomal protein S15"/>
    <property type="match status" value="1"/>
</dbReference>
<dbReference type="Gene3D" id="3.30.860.10">
    <property type="entry name" value="30s Ribosomal Protein S19, Chain A"/>
    <property type="match status" value="1"/>
</dbReference>
<dbReference type="HAMAP" id="MF_00531">
    <property type="entry name" value="Ribosomal_uS19"/>
    <property type="match status" value="1"/>
</dbReference>
<dbReference type="InterPro" id="IPR002222">
    <property type="entry name" value="Ribosomal_uS19"/>
</dbReference>
<dbReference type="InterPro" id="IPR020934">
    <property type="entry name" value="Ribosomal_uS19_CS"/>
</dbReference>
<dbReference type="InterPro" id="IPR005713">
    <property type="entry name" value="Ribosomal_uS19_euk/arc"/>
</dbReference>
<dbReference type="InterPro" id="IPR023575">
    <property type="entry name" value="Ribosomal_uS19_SF"/>
</dbReference>
<dbReference type="NCBIfam" id="NF003121">
    <property type="entry name" value="PRK04038.1"/>
    <property type="match status" value="1"/>
</dbReference>
<dbReference type="NCBIfam" id="TIGR01025">
    <property type="entry name" value="uS19_arch"/>
    <property type="match status" value="1"/>
</dbReference>
<dbReference type="PANTHER" id="PTHR11880">
    <property type="entry name" value="RIBOSOMAL PROTEIN S19P FAMILY MEMBER"/>
    <property type="match status" value="1"/>
</dbReference>
<dbReference type="PANTHER" id="PTHR11880:SF2">
    <property type="entry name" value="SMALL RIBOSOMAL SUBUNIT PROTEIN US19"/>
    <property type="match status" value="1"/>
</dbReference>
<dbReference type="Pfam" id="PF00203">
    <property type="entry name" value="Ribosomal_S19"/>
    <property type="match status" value="1"/>
</dbReference>
<dbReference type="PIRSF" id="PIRSF002144">
    <property type="entry name" value="Ribosomal_S19"/>
    <property type="match status" value="1"/>
</dbReference>
<dbReference type="PRINTS" id="PR00975">
    <property type="entry name" value="RIBOSOMALS19"/>
</dbReference>
<dbReference type="SUPFAM" id="SSF54570">
    <property type="entry name" value="Ribosomal protein S19"/>
    <property type="match status" value="1"/>
</dbReference>
<dbReference type="PROSITE" id="PS00323">
    <property type="entry name" value="RIBOSOMAL_S19"/>
    <property type="match status" value="1"/>
</dbReference>
<organism>
    <name type="scientific">Schizosaccharomyces pombe (strain 972 / ATCC 24843)</name>
    <name type="common">Fission yeast</name>
    <dbReference type="NCBI Taxonomy" id="284812"/>
    <lineage>
        <taxon>Eukaryota</taxon>
        <taxon>Fungi</taxon>
        <taxon>Dikarya</taxon>
        <taxon>Ascomycota</taxon>
        <taxon>Taphrinomycotina</taxon>
        <taxon>Schizosaccharomycetes</taxon>
        <taxon>Schizosaccharomycetales</taxon>
        <taxon>Schizosaccharomycetaceae</taxon>
        <taxon>Schizosaccharomyces</taxon>
    </lineage>
</organism>
<comment type="function">
    <text evidence="1">Component of the ribosome, a large ribonucleoprotein complex responsible for the synthesis of proteins in the cell. The small ribosomal subunit (SSU) binds messenger RNAs (mRNAs) and translates the encoded message by selecting cognate aminoacyl-transfer RNA (tRNA) molecules. The large subunit (LSU) contains the ribosomal catalytic site termed the peptidyl transferase center (PTC), which catalyzes the formation of peptide bonds, thereby polymerizing the amino acids delivered by tRNAs into a polypeptide chain. The nascent polypeptides leave the ribosome through a tunnel in the LSU and interact with protein factors that function in enzymatic processing, targeting, and the membrane insertion of nascent chains at the exit of the ribosomal tunnel. uS19 is involved in the nuclear export of the small ribosomal subunit precursor. Has a role in the late stage of the assembly of pre-40S particles within the nucleus and controls their export to the cytoplasm.</text>
</comment>
<comment type="subunit">
    <text evidence="1">Component of the small ribosomal subunit (SSU). Mature yeast ribosomes consist of a small (40S) and a large (60S) subunit. The 40S small subunit contains 1 molecule of ribosomal RNA (18S rRNA) and at least 33 different proteins. The large 60S subunit contains 3 rRNA molecules (25S, 5.8S and 5S rRNA) and at least 46 different proteins.</text>
</comment>
<comment type="subcellular location">
    <subcellularLocation>
        <location evidence="1">Cytoplasm</location>
    </subcellularLocation>
    <subcellularLocation>
        <location evidence="2">Nucleus</location>
    </subcellularLocation>
    <subcellularLocation>
        <location evidence="2">Nucleus</location>
        <location evidence="2">Nucleolus</location>
    </subcellularLocation>
</comment>
<comment type="miscellaneous">
    <text>There are 2 genes for uS19 in S.pombe.</text>
</comment>
<comment type="similarity">
    <text evidence="3">Belongs to the universal ribosomal protein uS19 family.</text>
</comment>
<feature type="chain" id="PRO_0000130049" description="Small ribosomal subunit protein uS19A">
    <location>
        <begin position="1"/>
        <end position="153"/>
    </location>
</feature>
<keyword id="KW-0963">Cytoplasm</keyword>
<keyword id="KW-0539">Nucleus</keyword>
<keyword id="KW-1185">Reference proteome</keyword>
<keyword id="KW-0687">Ribonucleoprotein</keyword>
<keyword id="KW-0689">Ribosomal protein</keyword>
<reference key="1">
    <citation type="journal article" date="2002" name="Nature">
        <title>The genome sequence of Schizosaccharomyces pombe.</title>
        <authorList>
            <person name="Wood V."/>
            <person name="Gwilliam R."/>
            <person name="Rajandream M.A."/>
            <person name="Lyne M.H."/>
            <person name="Lyne R."/>
            <person name="Stewart A."/>
            <person name="Sgouros J.G."/>
            <person name="Peat N."/>
            <person name="Hayles J."/>
            <person name="Baker S.G."/>
            <person name="Basham D."/>
            <person name="Bowman S."/>
            <person name="Brooks K."/>
            <person name="Brown D."/>
            <person name="Brown S."/>
            <person name="Chillingworth T."/>
            <person name="Churcher C.M."/>
            <person name="Collins M."/>
            <person name="Connor R."/>
            <person name="Cronin A."/>
            <person name="Davis P."/>
            <person name="Feltwell T."/>
            <person name="Fraser A."/>
            <person name="Gentles S."/>
            <person name="Goble A."/>
            <person name="Hamlin N."/>
            <person name="Harris D.E."/>
            <person name="Hidalgo J."/>
            <person name="Hodgson G."/>
            <person name="Holroyd S."/>
            <person name="Hornsby T."/>
            <person name="Howarth S."/>
            <person name="Huckle E.J."/>
            <person name="Hunt S."/>
            <person name="Jagels K."/>
            <person name="James K.D."/>
            <person name="Jones L."/>
            <person name="Jones M."/>
            <person name="Leather S."/>
            <person name="McDonald S."/>
            <person name="McLean J."/>
            <person name="Mooney P."/>
            <person name="Moule S."/>
            <person name="Mungall K.L."/>
            <person name="Murphy L.D."/>
            <person name="Niblett D."/>
            <person name="Odell C."/>
            <person name="Oliver K."/>
            <person name="O'Neil S."/>
            <person name="Pearson D."/>
            <person name="Quail M.A."/>
            <person name="Rabbinowitsch E."/>
            <person name="Rutherford K.M."/>
            <person name="Rutter S."/>
            <person name="Saunders D."/>
            <person name="Seeger K."/>
            <person name="Sharp S."/>
            <person name="Skelton J."/>
            <person name="Simmonds M.N."/>
            <person name="Squares R."/>
            <person name="Squares S."/>
            <person name="Stevens K."/>
            <person name="Taylor K."/>
            <person name="Taylor R.G."/>
            <person name="Tivey A."/>
            <person name="Walsh S.V."/>
            <person name="Warren T."/>
            <person name="Whitehead S."/>
            <person name="Woodward J.R."/>
            <person name="Volckaert G."/>
            <person name="Aert R."/>
            <person name="Robben J."/>
            <person name="Grymonprez B."/>
            <person name="Weltjens I."/>
            <person name="Vanstreels E."/>
            <person name="Rieger M."/>
            <person name="Schaefer M."/>
            <person name="Mueller-Auer S."/>
            <person name="Gabel C."/>
            <person name="Fuchs M."/>
            <person name="Duesterhoeft A."/>
            <person name="Fritzc C."/>
            <person name="Holzer E."/>
            <person name="Moestl D."/>
            <person name="Hilbert H."/>
            <person name="Borzym K."/>
            <person name="Langer I."/>
            <person name="Beck A."/>
            <person name="Lehrach H."/>
            <person name="Reinhardt R."/>
            <person name="Pohl T.M."/>
            <person name="Eger P."/>
            <person name="Zimmermann W."/>
            <person name="Wedler H."/>
            <person name="Wambutt R."/>
            <person name="Purnelle B."/>
            <person name="Goffeau A."/>
            <person name="Cadieu E."/>
            <person name="Dreano S."/>
            <person name="Gloux S."/>
            <person name="Lelaure V."/>
            <person name="Mottier S."/>
            <person name="Galibert F."/>
            <person name="Aves S.J."/>
            <person name="Xiang Z."/>
            <person name="Hunt C."/>
            <person name="Moore K."/>
            <person name="Hurst S.M."/>
            <person name="Lucas M."/>
            <person name="Rochet M."/>
            <person name="Gaillardin C."/>
            <person name="Tallada V.A."/>
            <person name="Garzon A."/>
            <person name="Thode G."/>
            <person name="Daga R.R."/>
            <person name="Cruzado L."/>
            <person name="Jimenez J."/>
            <person name="Sanchez M."/>
            <person name="del Rey F."/>
            <person name="Benito J."/>
            <person name="Dominguez A."/>
            <person name="Revuelta J.L."/>
            <person name="Moreno S."/>
            <person name="Armstrong J."/>
            <person name="Forsburg S.L."/>
            <person name="Cerutti L."/>
            <person name="Lowe T."/>
            <person name="McCombie W.R."/>
            <person name="Paulsen I."/>
            <person name="Potashkin J."/>
            <person name="Shpakovski G.V."/>
            <person name="Ussery D."/>
            <person name="Barrell B.G."/>
            <person name="Nurse P."/>
        </authorList>
    </citation>
    <scope>NUCLEOTIDE SEQUENCE [LARGE SCALE GENOMIC DNA]</scope>
    <source>
        <strain>972 / ATCC 24843</strain>
    </source>
</reference>
<reference key="2">
    <citation type="journal article" date="2006" name="Nat. Biotechnol.">
        <title>ORFeome cloning and global analysis of protein localization in the fission yeast Schizosaccharomyces pombe.</title>
        <authorList>
            <person name="Matsuyama A."/>
            <person name="Arai R."/>
            <person name="Yashiroda Y."/>
            <person name="Shirai A."/>
            <person name="Kamata A."/>
            <person name="Sekido S."/>
            <person name="Kobayashi Y."/>
            <person name="Hashimoto A."/>
            <person name="Hamamoto M."/>
            <person name="Hiraoka Y."/>
            <person name="Horinouchi S."/>
            <person name="Yoshida M."/>
        </authorList>
    </citation>
    <scope>SUBCELLULAR LOCATION [LARGE SCALE ANALYSIS]</scope>
</reference>